<comment type="function">
    <text evidence="6 8 9 11 12 13">Thought to act as molecular guidance cue in cellular migration, and function appears to be mediated by interaction with roundabout homolog receptors. During neural development involved in axonal navigation at the ventral midline of the neural tube and projection of axons to different regions. SLIT1 and SLIT2 seem to be essential for midline guidance in the forebrain by acting as repulsive signal preventing inappropriate midline crossing by axons projecting from the olfactory bulb. In spinal cord development may play a role in guiding commissural axons once they reached the floor plate by modulating the response to netrin. In vitro, silences the attractive effect of NTN1 but not its growth-stimulatory effect and silencing requires the formation of a ROBO1-DCC complex. May be implicated in spinal cord midline post-crossing axon repulsion. In vitro, only commissural axons that crossed the midline responded to SLIT2. In the developing visual system appears to function as repellent for retinal ganglion axons by providing a repulsion that directs these axons along their appropriate paths prior to, and after passage through, the optic chiasm. In vitro, collapses and repels retinal ganglion cell growth cones. Seems to play a role in branching and arborization of CNS sensory axons, and in neuronal cell migration. In vitro, Slit homolog 2 protein N-product, but not Slit homolog 2 protein C-product, repels olfactory bulb (OB) but not dorsal root ganglia (DRG) axons, induces OB growth cones collapse and induces branching of DRG axons. Seems to be involved in regulating leukocyte migration.</text>
</comment>
<comment type="subunit">
    <text evidence="1 6 13 14 15">Interacts with GREM1 (By similarity). Homodimer. Binds ROBO1 and ROBO2 with high affinity.</text>
</comment>
<comment type="interaction">
    <interactant intactId="EBI-1236865">
        <id>O94813</id>
    </interactant>
    <interactant intactId="EBI-399762">
        <id>Q9Y6N7</id>
        <label>ROBO1</label>
    </interactant>
    <organismsDiffer>false</organismsDiffer>
    <experiments>2</experiments>
</comment>
<comment type="interaction">
    <interactant intactId="EBI-1236865">
        <id>O94813</id>
    </interactant>
    <interactant intactId="EBI-1236865">
        <id>O94813</id>
        <label>SLIT2</label>
    </interactant>
    <organismsDiffer>false</organismsDiffer>
    <experiments>2</experiments>
</comment>
<comment type="subcellular location">
    <subcellularLocation>
        <location evidence="6">Secreted</location>
    </subcellularLocation>
    <text>The C-terminal cleavage protein is more diffusible than the larger N-terminal protein that is more tightly cell associated.</text>
</comment>
<comment type="alternative products">
    <event type="alternative splicing"/>
    <isoform>
        <id>O94813-1</id>
        <name evidence="21">1</name>
        <sequence type="displayed"/>
    </isoform>
    <isoform>
        <id>O94813-2</id>
        <name evidence="21">2</name>
        <sequence type="described" ref="VSP_050035 VSP_050036"/>
    </isoform>
    <isoform>
        <id>O94813-3</id>
        <name evidence="21">3</name>
        <sequence type="described" ref="VSP_050036"/>
    </isoform>
</comment>
<comment type="tissue specificity">
    <text evidence="7 16">Fetal lung and kidney, and adult spinal cord. Weak expression in adult adrenal gland, thyroid, trachea and other tissues examined.</text>
</comment>
<comment type="domain">
    <text evidence="10">The leucine-rich repeat domain is sufficient for guiding both axon projection and neuronal migration, in vitro.</text>
</comment>
<comment type="online information" name="Atlas of Genetics and Cytogenetics in Oncology and Haematology">
    <link uri="https://atlasgeneticsoncology.org/gene/42328/SLIT2"/>
</comment>
<accession>O94813</accession>
<accession>A0A0A6YYB8</accession>
<accession>B7ZLR5</accession>
<accession>O95710</accession>
<accession>Q17RU3</accession>
<accession>Q9Y5Q7</accession>
<proteinExistence type="evidence at protein level"/>
<evidence type="ECO:0000250" key="1"/>
<evidence type="ECO:0000255" key="2"/>
<evidence type="ECO:0000255" key="3">
    <source>
        <dbReference type="PROSITE-ProRule" id="PRU00039"/>
    </source>
</evidence>
<evidence type="ECO:0000255" key="4">
    <source>
        <dbReference type="PROSITE-ProRule" id="PRU00076"/>
    </source>
</evidence>
<evidence type="ECO:0000255" key="5">
    <source>
        <dbReference type="PROSITE-ProRule" id="PRU00122"/>
    </source>
</evidence>
<evidence type="ECO:0000269" key="6">
    <source>
    </source>
</evidence>
<evidence type="ECO:0000269" key="7">
    <source>
    </source>
</evidence>
<evidence type="ECO:0000269" key="8">
    <source>
    </source>
</evidence>
<evidence type="ECO:0000269" key="9">
    <source>
    </source>
</evidence>
<evidence type="ECO:0000269" key="10">
    <source>
    </source>
</evidence>
<evidence type="ECO:0000269" key="11">
    <source>
    </source>
</evidence>
<evidence type="ECO:0000269" key="12">
    <source>
    </source>
</evidence>
<evidence type="ECO:0000269" key="13">
    <source>
    </source>
</evidence>
<evidence type="ECO:0000269" key="14">
    <source>
    </source>
</evidence>
<evidence type="ECO:0000269" key="15">
    <source>
    </source>
</evidence>
<evidence type="ECO:0000269" key="16">
    <source>
    </source>
</evidence>
<evidence type="ECO:0000303" key="17">
    <source>
    </source>
</evidence>
<evidence type="ECO:0000303" key="18">
    <source>
    </source>
</evidence>
<evidence type="ECO:0000303" key="19">
    <source>
    </source>
</evidence>
<evidence type="ECO:0000303" key="20">
    <source>
    </source>
</evidence>
<evidence type="ECO:0000305" key="21"/>
<evidence type="ECO:0000312" key="22">
    <source>
        <dbReference type="EMBL" id="BAA35185.1"/>
    </source>
</evidence>
<evidence type="ECO:0007829" key="23">
    <source>
        <dbReference type="PDB" id="2V70"/>
    </source>
</evidence>
<evidence type="ECO:0007829" key="24">
    <source>
        <dbReference type="PDB" id="2V9S"/>
    </source>
</evidence>
<evidence type="ECO:0007829" key="25">
    <source>
        <dbReference type="PDB" id="2V9T"/>
    </source>
</evidence>
<evidence type="ECO:0007829" key="26">
    <source>
        <dbReference type="PDB" id="2WFH"/>
    </source>
</evidence>
<keyword id="KW-0002">3D-structure</keyword>
<keyword id="KW-0025">Alternative splicing</keyword>
<keyword id="KW-0145">Chemotaxis</keyword>
<keyword id="KW-0217">Developmental protein</keyword>
<keyword id="KW-0221">Differentiation</keyword>
<keyword id="KW-0903">Direct protein sequencing</keyword>
<keyword id="KW-1015">Disulfide bond</keyword>
<keyword id="KW-0245">EGF-like domain</keyword>
<keyword id="KW-0325">Glycoprotein</keyword>
<keyword id="KW-0358">Heparin-binding</keyword>
<keyword id="KW-0433">Leucine-rich repeat</keyword>
<keyword id="KW-0524">Neurogenesis</keyword>
<keyword id="KW-1267">Proteomics identification</keyword>
<keyword id="KW-1185">Reference proteome</keyword>
<keyword id="KW-0677">Repeat</keyword>
<keyword id="KW-0964">Secreted</keyword>
<keyword id="KW-0732">Signal</keyword>
<gene>
    <name type="primary">SLIT2</name>
    <name type="synonym">SLIL3</name>
</gene>
<reference evidence="21" key="1">
    <citation type="journal article" date="1998" name="Brain Res. Mol. Brain Res.">
        <title>Cloning and expressions of three mammalian homologues of Drosophila slit suggest possible roles for Slit in the formation and maintenance of the nervous system.</title>
        <authorList>
            <person name="Itoh A."/>
            <person name="Miyabayashi T."/>
            <person name="Ohno M."/>
            <person name="Sakano S."/>
        </authorList>
    </citation>
    <scope>NUCLEOTIDE SEQUENCE [MRNA] (ISOFORMS 1 AND 2)</scope>
    <scope>TISSUE SPECIFICITY</scope>
    <scope>VARIANTS PRO-636 AND PHE-1277</scope>
    <source>
        <tissue>Fetal lung</tissue>
    </source>
</reference>
<reference evidence="21" key="2">
    <citation type="journal article" date="1998" name="Mech. Dev.">
        <title>Distinct but overlapping expression patterns of two vertebrate slit homologs implies functional roles in CNS development and organogenesis.</title>
        <authorList>
            <person name="Holmes G.P."/>
            <person name="Negus K."/>
            <person name="Burridge L."/>
            <person name="Raman S."/>
            <person name="Algar E."/>
            <person name="Yamada T."/>
            <person name="Little M.H."/>
        </authorList>
    </citation>
    <scope>NUCLEOTIDE SEQUENCE [MRNA] (ISOFORM 3)</scope>
    <scope>TISSUE SPECIFICITY</scope>
    <source>
        <tissue>Fetal brain</tissue>
        <tissue>Fetal kidney</tissue>
    </source>
</reference>
<reference evidence="21" key="3">
    <citation type="journal article" date="1999" name="Cell">
        <title>Slit proteins bind Robo receptors and have an evolutionarily conserved role in repulsive axon guidance.</title>
        <authorList>
            <person name="Brose K."/>
            <person name="Bland K.S."/>
            <person name="Wang K.H."/>
            <person name="Arnott D."/>
            <person name="Henzel W."/>
            <person name="Goodman C.S."/>
            <person name="Tessier-Lavigne M."/>
            <person name="Kidd T."/>
        </authorList>
    </citation>
    <scope>NUCLEOTIDE SEQUENCE [MRNA] (ISOFORM 2)</scope>
    <scope>PROTEIN SEQUENCE OF 1122-1129</scope>
    <scope>FUNCTION</scope>
    <scope>INTERACTION WITH ROBO1 AND ROBO2</scope>
    <scope>SUBCELLULAR LOCATION</scope>
    <source>
        <tissue>Fetal brain</tissue>
    </source>
</reference>
<reference key="4">
    <citation type="journal article" date="2005" name="Nature">
        <title>Generation and annotation of the DNA sequences of human chromosomes 2 and 4.</title>
        <authorList>
            <person name="Hillier L.W."/>
            <person name="Graves T.A."/>
            <person name="Fulton R.S."/>
            <person name="Fulton L.A."/>
            <person name="Pepin K.H."/>
            <person name="Minx P."/>
            <person name="Wagner-McPherson C."/>
            <person name="Layman D."/>
            <person name="Wylie K."/>
            <person name="Sekhon M."/>
            <person name="Becker M.C."/>
            <person name="Fewell G.A."/>
            <person name="Delehaunty K.D."/>
            <person name="Miner T.L."/>
            <person name="Nash W.E."/>
            <person name="Kremitzki C."/>
            <person name="Oddy L."/>
            <person name="Du H."/>
            <person name="Sun H."/>
            <person name="Bradshaw-Cordum H."/>
            <person name="Ali J."/>
            <person name="Carter J."/>
            <person name="Cordes M."/>
            <person name="Harris A."/>
            <person name="Isak A."/>
            <person name="van Brunt A."/>
            <person name="Nguyen C."/>
            <person name="Du F."/>
            <person name="Courtney L."/>
            <person name="Kalicki J."/>
            <person name="Ozersky P."/>
            <person name="Abbott S."/>
            <person name="Armstrong J."/>
            <person name="Belter E.A."/>
            <person name="Caruso L."/>
            <person name="Cedroni M."/>
            <person name="Cotton M."/>
            <person name="Davidson T."/>
            <person name="Desai A."/>
            <person name="Elliott G."/>
            <person name="Erb T."/>
            <person name="Fronick C."/>
            <person name="Gaige T."/>
            <person name="Haakenson W."/>
            <person name="Haglund K."/>
            <person name="Holmes A."/>
            <person name="Harkins R."/>
            <person name="Kim K."/>
            <person name="Kruchowski S.S."/>
            <person name="Strong C.M."/>
            <person name="Grewal N."/>
            <person name="Goyea E."/>
            <person name="Hou S."/>
            <person name="Levy A."/>
            <person name="Martinka S."/>
            <person name="Mead K."/>
            <person name="McLellan M.D."/>
            <person name="Meyer R."/>
            <person name="Randall-Maher J."/>
            <person name="Tomlinson C."/>
            <person name="Dauphin-Kohlberg S."/>
            <person name="Kozlowicz-Reilly A."/>
            <person name="Shah N."/>
            <person name="Swearengen-Shahid S."/>
            <person name="Snider J."/>
            <person name="Strong J.T."/>
            <person name="Thompson J."/>
            <person name="Yoakum M."/>
            <person name="Leonard S."/>
            <person name="Pearman C."/>
            <person name="Trani L."/>
            <person name="Radionenko M."/>
            <person name="Waligorski J.E."/>
            <person name="Wang C."/>
            <person name="Rock S.M."/>
            <person name="Tin-Wollam A.-M."/>
            <person name="Maupin R."/>
            <person name="Latreille P."/>
            <person name="Wendl M.C."/>
            <person name="Yang S.-P."/>
            <person name="Pohl C."/>
            <person name="Wallis J.W."/>
            <person name="Spieth J."/>
            <person name="Bieri T.A."/>
            <person name="Berkowicz N."/>
            <person name="Nelson J.O."/>
            <person name="Osborne J."/>
            <person name="Ding L."/>
            <person name="Meyer R."/>
            <person name="Sabo A."/>
            <person name="Shotland Y."/>
            <person name="Sinha P."/>
            <person name="Wohldmann P.E."/>
            <person name="Cook L.L."/>
            <person name="Hickenbotham M.T."/>
            <person name="Eldred J."/>
            <person name="Williams D."/>
            <person name="Jones T.A."/>
            <person name="She X."/>
            <person name="Ciccarelli F.D."/>
            <person name="Izaurralde E."/>
            <person name="Taylor J."/>
            <person name="Schmutz J."/>
            <person name="Myers R.M."/>
            <person name="Cox D.R."/>
            <person name="Huang X."/>
            <person name="McPherson J.D."/>
            <person name="Mardis E.R."/>
            <person name="Clifton S.W."/>
            <person name="Warren W.C."/>
            <person name="Chinwalla A.T."/>
            <person name="Eddy S.R."/>
            <person name="Marra M.A."/>
            <person name="Ovcharenko I."/>
            <person name="Furey T.S."/>
            <person name="Miller W."/>
            <person name="Eichler E.E."/>
            <person name="Bork P."/>
            <person name="Suyama M."/>
            <person name="Torrents D."/>
            <person name="Waterston R.H."/>
            <person name="Wilson R.K."/>
        </authorList>
    </citation>
    <scope>NUCLEOTIDE SEQUENCE [LARGE SCALE GENOMIC DNA]</scope>
</reference>
<reference key="5">
    <citation type="submission" date="2005-07" db="EMBL/GenBank/DDBJ databases">
        <authorList>
            <person name="Mural R.J."/>
            <person name="Istrail S."/>
            <person name="Sutton G.G."/>
            <person name="Florea L."/>
            <person name="Halpern A.L."/>
            <person name="Mobarry C.M."/>
            <person name="Lippert R."/>
            <person name="Walenz B."/>
            <person name="Shatkay H."/>
            <person name="Dew I."/>
            <person name="Miller J.R."/>
            <person name="Flanigan M.J."/>
            <person name="Edwards N.J."/>
            <person name="Bolanos R."/>
            <person name="Fasulo D."/>
            <person name="Halldorsson B.V."/>
            <person name="Hannenhalli S."/>
            <person name="Turner R."/>
            <person name="Yooseph S."/>
            <person name="Lu F."/>
            <person name="Nusskern D.R."/>
            <person name="Shue B.C."/>
            <person name="Zheng X.H."/>
            <person name="Zhong F."/>
            <person name="Delcher A.L."/>
            <person name="Huson D.H."/>
            <person name="Kravitz S.A."/>
            <person name="Mouchard L."/>
            <person name="Reinert K."/>
            <person name="Remington K.A."/>
            <person name="Clark A.G."/>
            <person name="Waterman M.S."/>
            <person name="Eichler E.E."/>
            <person name="Adams M.D."/>
            <person name="Hunkapiller M.W."/>
            <person name="Myers E.W."/>
            <person name="Venter J.C."/>
        </authorList>
    </citation>
    <scope>NUCLEOTIDE SEQUENCE [LARGE SCALE GENOMIC DNA]</scope>
</reference>
<reference key="6">
    <citation type="journal article" date="2004" name="Genome Res.">
        <title>The status, quality, and expansion of the NIH full-length cDNA project: the Mammalian Gene Collection (MGC).</title>
        <authorList>
            <consortium name="The MGC Project Team"/>
        </authorList>
    </citation>
    <scope>NUCLEOTIDE SEQUENCE [LARGE SCALE MRNA] (ISOFORMS 1 AND 3)</scope>
</reference>
<reference key="7">
    <citation type="journal article" date="2000" name="Cell">
        <title>Squeezing axons out of the gray matter: a role for slit and semaphorin proteins from midline and ventral spinal cord.</title>
        <authorList>
            <person name="Zou Y."/>
            <person name="Stoeckli E."/>
            <person name="Chen H."/>
            <person name="Tessier-Lavigne M."/>
        </authorList>
    </citation>
    <scope>FUNCTION</scope>
</reference>
<reference key="8">
    <citation type="journal article" date="2000" name="J. Neurosci.">
        <title>Slit2 is a repellent for retinal ganglion cell axons.</title>
        <authorList>
            <person name="Niclou S.P."/>
            <person name="Jia L."/>
            <person name="Raper J.A."/>
        </authorList>
    </citation>
    <scope>FUNCTION</scope>
</reference>
<reference key="9">
    <citation type="journal article" date="2001" name="Nature">
        <title>The neuronal repellent Slit inhibits leukocyte chemotaxis induced by chemotactic factors.</title>
        <authorList>
            <person name="Wu J.Y."/>
            <person name="Feng L."/>
            <person name="Park H.T."/>
            <person name="Havlioglu N."/>
            <person name="Wen L."/>
            <person name="Tang H."/>
            <person name="Bacon K.B."/>
            <person name="Jiang Z.H."/>
            <person name="Zhang X.C."/>
            <person name="Rao Y."/>
        </authorList>
    </citation>
    <scope>FUNCTION</scope>
</reference>
<reference key="10">
    <citation type="journal article" date="2001" name="J. Neurosci.">
        <title>The N-terminal leucine-rich regions in Slit are sufficient to repel olfactory bulb axons and subventricular zone neurons.</title>
        <authorList>
            <person name="Chen J.H."/>
            <person name="Wen L."/>
            <person name="Dupuis S."/>
            <person name="Wu J.Y."/>
            <person name="Rao Y."/>
        </authorList>
    </citation>
    <scope>DOMAIN</scope>
</reference>
<reference key="11">
    <citation type="journal article" date="2001" name="J. Neurosci.">
        <title>Diversity and specificity of actions of Slit2 proteolytic fragments in axon guidance.</title>
        <authorList>
            <person name="Nguyen-Ba-Charvet K.T."/>
            <person name="Brose K."/>
            <person name="Ma L."/>
            <person name="Wang K.H."/>
            <person name="Marillat V."/>
            <person name="Sotelo C."/>
            <person name="Tessier-Lavigne M."/>
            <person name="Chedotal A."/>
        </authorList>
    </citation>
    <scope>FUNCTION</scope>
    <scope>INTERACTION WITH ROBO1 AND ROBO2</scope>
</reference>
<reference key="12">
    <citation type="journal article" date="2001" name="Science">
        <title>Hierarchical organization of guidance receptors: silencing of netrin attraction by slit through a Robo/DCC receptor complex.</title>
        <authorList>
            <person name="Stein E."/>
            <person name="Tessier-Lavigne M."/>
        </authorList>
    </citation>
    <scope>FUNCTION</scope>
</reference>
<reference key="13">
    <citation type="journal article" date="2002" name="Curr. Opin. Genet. Dev.">
        <title>Slit proteins: molecular guidance cues for cells ranging from neurons to leukocytes.</title>
        <authorList>
            <person name="Wong K."/>
            <person name="Park H.T."/>
            <person name="Wu J.Y."/>
            <person name="Rao Y."/>
        </authorList>
    </citation>
    <scope>REVIEW</scope>
</reference>
<reference key="14">
    <citation type="journal article" date="2007" name="Acta Crystallogr. D">
        <title>Production of Slit2 LRR domains in mammalian cells for structural studies and the structure of human Slit2 domain 3.</title>
        <authorList>
            <person name="Morlot C."/>
            <person name="Hemrika W."/>
            <person name="Romijn R.A."/>
            <person name="Gros P."/>
            <person name="Cusack S."/>
            <person name="McCarthy A.A."/>
        </authorList>
    </citation>
    <scope>X-RAY CRYSTALLOGRAPHY (3.01 ANGSTROMS) OF 504-716</scope>
    <scope>DISULFIDE BONDS</scope>
</reference>
<reference key="15">
    <citation type="journal article" date="2007" name="Proc. Natl. Acad. Sci. U.S.A.">
        <title>Structural insights into the Slit-Robo complex.</title>
        <authorList>
            <person name="Morlot C."/>
            <person name="Thielens N.M."/>
            <person name="Ravelli R.B."/>
            <person name="Hemrika W."/>
            <person name="Romijn R.A."/>
            <person name="Gros P."/>
            <person name="Cusack S."/>
            <person name="McCarthy A.A."/>
        </authorList>
    </citation>
    <scope>X-RAY CRYSTALLOGRAPHY (1.7 ANGSTROMS) OF 271-480 IN COMPLEX WITH ROBO1</scope>
    <scope>DISULFIDE BONDS</scope>
</reference>
<reference key="16">
    <citation type="journal article" date="2009" name="EMBO Rep.">
        <title>Structure and functional relevance of the Slit2 homodimerization domain.</title>
        <authorList>
            <person name="Seiradake E."/>
            <person name="von Philipsborn A.C."/>
            <person name="Henry M."/>
            <person name="Fritz M."/>
            <person name="Lortat-Jacob H."/>
            <person name="Jamin M."/>
            <person name="Hemrika W."/>
            <person name="Bastmeyer M."/>
            <person name="Cusack S."/>
            <person name="McCarthy A.A."/>
        </authorList>
    </citation>
    <scope>X-RAY CRYSTALLOGRAPHY (1.8 ANGSTROMS) OF 726-907</scope>
    <scope>SUBUNIT</scope>
    <scope>DISULFIDE BONDS</scope>
    <scope>HEPARIN-BINDING</scope>
</reference>
<dbReference type="EMBL" id="AB017168">
    <property type="protein sequence ID" value="BAA35185.1"/>
    <property type="molecule type" value="mRNA"/>
</dbReference>
<dbReference type="EMBL" id="AF055585">
    <property type="protein sequence ID" value="AAD04309.1"/>
    <property type="molecule type" value="mRNA"/>
</dbReference>
<dbReference type="EMBL" id="AF133270">
    <property type="protein sequence ID" value="AAD25539.1"/>
    <property type="molecule type" value="mRNA"/>
</dbReference>
<dbReference type="EMBL" id="AC021118">
    <property type="status" value="NOT_ANNOTATED_CDS"/>
    <property type="molecule type" value="Genomic_DNA"/>
</dbReference>
<dbReference type="EMBL" id="AC092577">
    <property type="status" value="NOT_ANNOTATED_CDS"/>
    <property type="molecule type" value="Genomic_DNA"/>
</dbReference>
<dbReference type="EMBL" id="AC096718">
    <property type="status" value="NOT_ANNOTATED_CDS"/>
    <property type="molecule type" value="Genomic_DNA"/>
</dbReference>
<dbReference type="EMBL" id="AC108011">
    <property type="status" value="NOT_ANNOTATED_CDS"/>
    <property type="molecule type" value="Genomic_DNA"/>
</dbReference>
<dbReference type="EMBL" id="CH471069">
    <property type="protein sequence ID" value="EAW92793.1"/>
    <property type="molecule type" value="Genomic_DNA"/>
</dbReference>
<dbReference type="EMBL" id="BC117190">
    <property type="protein sequence ID" value="AAI17191.1"/>
    <property type="molecule type" value="mRNA"/>
</dbReference>
<dbReference type="EMBL" id="BC143978">
    <property type="protein sequence ID" value="AAI43979.1"/>
    <property type="molecule type" value="mRNA"/>
</dbReference>
<dbReference type="CCDS" id="CCDS3426.1">
    <molecule id="O94813-1"/>
</dbReference>
<dbReference type="CCDS" id="CCDS75110.1">
    <molecule id="O94813-2"/>
</dbReference>
<dbReference type="CCDS" id="CCDS75111.1">
    <molecule id="O94813-3"/>
</dbReference>
<dbReference type="RefSeq" id="NP_001276064.1">
    <molecule id="O94813-2"/>
    <property type="nucleotide sequence ID" value="NM_001289135.3"/>
</dbReference>
<dbReference type="RefSeq" id="NP_001276065.1">
    <molecule id="O94813-3"/>
    <property type="nucleotide sequence ID" value="NM_001289136.3"/>
</dbReference>
<dbReference type="RefSeq" id="NP_004778.1">
    <molecule id="O94813-1"/>
    <property type="nucleotide sequence ID" value="NM_004787.4"/>
</dbReference>
<dbReference type="PDB" id="2V70">
    <property type="method" value="X-ray"/>
    <property type="resolution" value="3.01 A"/>
    <property type="chains" value="A/B/C/D=504-714"/>
</dbReference>
<dbReference type="PDB" id="2V9S">
    <property type="method" value="X-ray"/>
    <property type="resolution" value="2.00 A"/>
    <property type="chains" value="A/B/C/D=271-480"/>
</dbReference>
<dbReference type="PDB" id="2V9T">
    <property type="method" value="X-ray"/>
    <property type="resolution" value="1.70 A"/>
    <property type="chains" value="B=271-479"/>
</dbReference>
<dbReference type="PDB" id="2WFH">
    <property type="method" value="X-ray"/>
    <property type="resolution" value="1.80 A"/>
    <property type="chains" value="A/B=726-907"/>
</dbReference>
<dbReference type="PDBsum" id="2V70"/>
<dbReference type="PDBsum" id="2V9S"/>
<dbReference type="PDBsum" id="2V9T"/>
<dbReference type="PDBsum" id="2WFH"/>
<dbReference type="SMR" id="O94813"/>
<dbReference type="BioGRID" id="114756">
    <property type="interactions" value="61"/>
</dbReference>
<dbReference type="DIP" id="DIP-38198N"/>
<dbReference type="FunCoup" id="O94813">
    <property type="interactions" value="591"/>
</dbReference>
<dbReference type="IntAct" id="O94813">
    <property type="interactions" value="39"/>
</dbReference>
<dbReference type="MINT" id="O94813"/>
<dbReference type="STRING" id="9606.ENSP00000422591"/>
<dbReference type="TCDB" id="9.B.87.1.32">
    <property type="family name" value="the selenoprotein p receptor (selp-receptor) family"/>
</dbReference>
<dbReference type="GlyCosmos" id="O94813">
    <property type="glycosylation" value="12 sites, No reported glycans"/>
</dbReference>
<dbReference type="GlyGen" id="O94813">
    <property type="glycosylation" value="13 sites, 12 N-linked glycans (7 sites), 1 O-linked glycan (1 site)"/>
</dbReference>
<dbReference type="iPTMnet" id="O94813"/>
<dbReference type="PhosphoSitePlus" id="O94813"/>
<dbReference type="BioMuta" id="SLIT2"/>
<dbReference type="jPOST" id="O94813"/>
<dbReference type="MassIVE" id="O94813"/>
<dbReference type="PaxDb" id="9606-ENSP00000422591"/>
<dbReference type="PeptideAtlas" id="O94813"/>
<dbReference type="ProteomicsDB" id="50454">
    <molecule id="O94813-1"/>
</dbReference>
<dbReference type="ProteomicsDB" id="50455">
    <molecule id="O94813-2"/>
</dbReference>
<dbReference type="ProteomicsDB" id="50456">
    <molecule id="O94813-3"/>
</dbReference>
<dbReference type="Pumba" id="O94813"/>
<dbReference type="Antibodypedia" id="3487">
    <property type="antibodies" value="322 antibodies from 39 providers"/>
</dbReference>
<dbReference type="DNASU" id="9353"/>
<dbReference type="Ensembl" id="ENST00000503823.5">
    <molecule id="O94813-3"/>
    <property type="protein sequence ID" value="ENSP00000427548.1"/>
    <property type="gene ID" value="ENSG00000145147.20"/>
</dbReference>
<dbReference type="Ensembl" id="ENST00000503837.5">
    <molecule id="O94813-2"/>
    <property type="protein sequence ID" value="ENSP00000422261.1"/>
    <property type="gene ID" value="ENSG00000145147.20"/>
</dbReference>
<dbReference type="Ensembl" id="ENST00000504154.6">
    <molecule id="O94813-1"/>
    <property type="protein sequence ID" value="ENSP00000422591.1"/>
    <property type="gene ID" value="ENSG00000145147.20"/>
</dbReference>
<dbReference type="GeneID" id="9353"/>
<dbReference type="KEGG" id="hsa:9353"/>
<dbReference type="MANE-Select" id="ENST00000504154.6">
    <property type="protein sequence ID" value="ENSP00000422591.1"/>
    <property type="RefSeq nucleotide sequence ID" value="NM_004787.4"/>
    <property type="RefSeq protein sequence ID" value="NP_004778.1"/>
</dbReference>
<dbReference type="UCSC" id="uc003gpr.3">
    <molecule id="O94813-1"/>
    <property type="organism name" value="human"/>
</dbReference>
<dbReference type="AGR" id="HGNC:11086"/>
<dbReference type="CTD" id="9353"/>
<dbReference type="DisGeNET" id="9353"/>
<dbReference type="GeneCards" id="SLIT2"/>
<dbReference type="HGNC" id="HGNC:11086">
    <property type="gene designation" value="SLIT2"/>
</dbReference>
<dbReference type="HPA" id="ENSG00000145147">
    <property type="expression patterns" value="Low tissue specificity"/>
</dbReference>
<dbReference type="MalaCards" id="SLIT2"/>
<dbReference type="MIM" id="603746">
    <property type="type" value="gene"/>
</dbReference>
<dbReference type="neXtProt" id="NX_O94813"/>
<dbReference type="OpenTargets" id="ENSG00000145147"/>
<dbReference type="PharmGKB" id="PA35939"/>
<dbReference type="VEuPathDB" id="HostDB:ENSG00000145147"/>
<dbReference type="eggNOG" id="KOG4237">
    <property type="taxonomic scope" value="Eukaryota"/>
</dbReference>
<dbReference type="GeneTree" id="ENSGT00940000158402"/>
<dbReference type="InParanoid" id="O94813"/>
<dbReference type="OrthoDB" id="283575at2759"/>
<dbReference type="PAN-GO" id="O94813">
    <property type="GO annotations" value="5 GO annotations based on evolutionary models"/>
</dbReference>
<dbReference type="PhylomeDB" id="O94813"/>
<dbReference type="TreeFam" id="TF332887"/>
<dbReference type="PathwayCommons" id="O94813"/>
<dbReference type="Reactome" id="R-HSA-373752">
    <property type="pathway name" value="Netrin-1 signaling"/>
</dbReference>
<dbReference type="Reactome" id="R-HSA-376176">
    <property type="pathway name" value="Signaling by ROBO receptors"/>
</dbReference>
<dbReference type="Reactome" id="R-HSA-428540">
    <property type="pathway name" value="Activation of RAC1"/>
</dbReference>
<dbReference type="Reactome" id="R-HSA-428542">
    <property type="pathway name" value="Regulation of commissural axon pathfinding by SLIT and ROBO"/>
</dbReference>
<dbReference type="Reactome" id="R-HSA-428543">
    <property type="pathway name" value="Inactivation of CDC42 and RAC1"/>
</dbReference>
<dbReference type="Reactome" id="R-HSA-428890">
    <property type="pathway name" value="Role of ABL in ROBO-SLIT signaling"/>
</dbReference>
<dbReference type="Reactome" id="R-HSA-8985586">
    <property type="pathway name" value="SLIT2:ROBO1 increases RHOA activity"/>
</dbReference>
<dbReference type="Reactome" id="R-HSA-9010553">
    <property type="pathway name" value="Regulation of expression of SLITs and ROBOs"/>
</dbReference>
<dbReference type="Reactome" id="R-HSA-9830674">
    <property type="pathway name" value="Formation of the ureteric bud"/>
</dbReference>
<dbReference type="SignaLink" id="O94813"/>
<dbReference type="SIGNOR" id="O94813"/>
<dbReference type="BioGRID-ORCS" id="9353">
    <property type="hits" value="7 hits in 1158 CRISPR screens"/>
</dbReference>
<dbReference type="ChiTaRS" id="SLIT2">
    <property type="organism name" value="human"/>
</dbReference>
<dbReference type="EvolutionaryTrace" id="O94813"/>
<dbReference type="GeneWiki" id="SLIT2"/>
<dbReference type="GenomeRNAi" id="9353"/>
<dbReference type="Pharos" id="O94813">
    <property type="development level" value="Tbio"/>
</dbReference>
<dbReference type="PRO" id="PR:O94813"/>
<dbReference type="Proteomes" id="UP000005640">
    <property type="component" value="Chromosome 4"/>
</dbReference>
<dbReference type="RNAct" id="O94813">
    <property type="molecule type" value="protein"/>
</dbReference>
<dbReference type="Bgee" id="ENSG00000145147">
    <property type="expression patterns" value="Expressed in lower lobe of lung and 198 other cell types or tissues"/>
</dbReference>
<dbReference type="ExpressionAtlas" id="O94813">
    <property type="expression patterns" value="baseline and differential"/>
</dbReference>
<dbReference type="GO" id="GO:0005737">
    <property type="term" value="C:cytoplasm"/>
    <property type="evidence" value="ECO:0000314"/>
    <property type="project" value="UniProtKB"/>
</dbReference>
<dbReference type="GO" id="GO:0070062">
    <property type="term" value="C:extracellular exosome"/>
    <property type="evidence" value="ECO:0007005"/>
    <property type="project" value="UniProtKB"/>
</dbReference>
<dbReference type="GO" id="GO:0005576">
    <property type="term" value="C:extracellular region"/>
    <property type="evidence" value="ECO:0000304"/>
    <property type="project" value="Reactome"/>
</dbReference>
<dbReference type="GO" id="GO:0005615">
    <property type="term" value="C:extracellular space"/>
    <property type="evidence" value="ECO:0000314"/>
    <property type="project" value="UniProtKB"/>
</dbReference>
<dbReference type="GO" id="GO:0016020">
    <property type="term" value="C:membrane"/>
    <property type="evidence" value="ECO:0000303"/>
    <property type="project" value="UniProtKB"/>
</dbReference>
<dbReference type="GO" id="GO:0005509">
    <property type="term" value="F:calcium ion binding"/>
    <property type="evidence" value="ECO:0000303"/>
    <property type="project" value="UniProtKB"/>
</dbReference>
<dbReference type="GO" id="GO:0005095">
    <property type="term" value="F:GTPase inhibitor activity"/>
    <property type="evidence" value="ECO:0000314"/>
    <property type="project" value="UniProtKB"/>
</dbReference>
<dbReference type="GO" id="GO:0008201">
    <property type="term" value="F:heparin binding"/>
    <property type="evidence" value="ECO:0000314"/>
    <property type="project" value="UniProtKB"/>
</dbReference>
<dbReference type="GO" id="GO:0042802">
    <property type="term" value="F:identical protein binding"/>
    <property type="evidence" value="ECO:0000353"/>
    <property type="project" value="IntAct"/>
</dbReference>
<dbReference type="GO" id="GO:0043237">
    <property type="term" value="F:laminin-1 binding"/>
    <property type="evidence" value="ECO:0000314"/>
    <property type="project" value="UniProtKB"/>
</dbReference>
<dbReference type="GO" id="GO:0042803">
    <property type="term" value="F:protein homodimerization activity"/>
    <property type="evidence" value="ECO:0000314"/>
    <property type="project" value="UniProtKB"/>
</dbReference>
<dbReference type="GO" id="GO:0043394">
    <property type="term" value="F:proteoglycan binding"/>
    <property type="evidence" value="ECO:0000353"/>
    <property type="project" value="UniProtKB"/>
</dbReference>
<dbReference type="GO" id="GO:0048495">
    <property type="term" value="F:Roundabout binding"/>
    <property type="evidence" value="ECO:0000353"/>
    <property type="project" value="UniProtKB"/>
</dbReference>
<dbReference type="GO" id="GO:0003180">
    <property type="term" value="P:aortic valve morphogenesis"/>
    <property type="evidence" value="ECO:0000250"/>
    <property type="project" value="BHF-UCL"/>
</dbReference>
<dbReference type="GO" id="GO:0061364">
    <property type="term" value="P:apoptotic process involved in luteolysis"/>
    <property type="evidence" value="ECO:0000270"/>
    <property type="project" value="UniProtKB"/>
</dbReference>
<dbReference type="GO" id="GO:0048846">
    <property type="term" value="P:axon extension involved in axon guidance"/>
    <property type="evidence" value="ECO:0000314"/>
    <property type="project" value="UniProtKB"/>
</dbReference>
<dbReference type="GO" id="GO:0007411">
    <property type="term" value="P:axon guidance"/>
    <property type="evidence" value="ECO:0000314"/>
    <property type="project" value="UniProtKB"/>
</dbReference>
<dbReference type="GO" id="GO:0048754">
    <property type="term" value="P:branching morphogenesis of an epithelial tube"/>
    <property type="evidence" value="ECO:0000314"/>
    <property type="project" value="UniProtKB"/>
</dbReference>
<dbReference type="GO" id="GO:0002042">
    <property type="term" value="P:cell migration involved in sprouting angiogenesis"/>
    <property type="evidence" value="ECO:0000315"/>
    <property type="project" value="BHF-UCL"/>
</dbReference>
<dbReference type="GO" id="GO:0071504">
    <property type="term" value="P:cellular response to heparin"/>
    <property type="evidence" value="ECO:0000314"/>
    <property type="project" value="UniProtKB"/>
</dbReference>
<dbReference type="GO" id="GO:0032870">
    <property type="term" value="P:cellular response to hormone stimulus"/>
    <property type="evidence" value="ECO:0000270"/>
    <property type="project" value="UniProtKB"/>
</dbReference>
<dbReference type="GO" id="GO:0021836">
    <property type="term" value="P:chemorepulsion involved in postnatal olfactory bulb interneuron migration"/>
    <property type="evidence" value="ECO:0000314"/>
    <property type="project" value="UniProtKB"/>
</dbReference>
<dbReference type="GO" id="GO:0021972">
    <property type="term" value="P:corticospinal neuron axon guidance through spinal cord"/>
    <property type="evidence" value="ECO:0000315"/>
    <property type="project" value="BHF-UCL"/>
</dbReference>
<dbReference type="GO" id="GO:0050929">
    <property type="term" value="P:induction of negative chemotaxis"/>
    <property type="evidence" value="ECO:0000314"/>
    <property type="project" value="UniProtKB"/>
</dbReference>
<dbReference type="GO" id="GO:0008045">
    <property type="term" value="P:motor neuron axon guidance"/>
    <property type="evidence" value="ECO:0000314"/>
    <property type="project" value="UniProtKB"/>
</dbReference>
<dbReference type="GO" id="GO:0050919">
    <property type="term" value="P:negative chemotaxis"/>
    <property type="evidence" value="ECO:0000314"/>
    <property type="project" value="UniProtKB"/>
</dbReference>
<dbReference type="GO" id="GO:0030837">
    <property type="term" value="P:negative regulation of actin filament polymerization"/>
    <property type="evidence" value="ECO:0000314"/>
    <property type="project" value="UniProtKB"/>
</dbReference>
<dbReference type="GO" id="GO:0030308">
    <property type="term" value="P:negative regulation of cell growth"/>
    <property type="evidence" value="ECO:0000315"/>
    <property type="project" value="BHF-UCL"/>
</dbReference>
<dbReference type="GO" id="GO:0030336">
    <property type="term" value="P:negative regulation of cell migration"/>
    <property type="evidence" value="ECO:0000314"/>
    <property type="project" value="UniProtKB"/>
</dbReference>
<dbReference type="GO" id="GO:0090288">
    <property type="term" value="P:negative regulation of cellular response to growth factor stimulus"/>
    <property type="evidence" value="ECO:0000314"/>
    <property type="project" value="BHF-UCL"/>
</dbReference>
<dbReference type="GO" id="GO:0070100">
    <property type="term" value="P:negative regulation of chemokine-mediated signaling pathway"/>
    <property type="evidence" value="ECO:0000315"/>
    <property type="project" value="BHF-UCL"/>
</dbReference>
<dbReference type="GO" id="GO:0010596">
    <property type="term" value="P:negative regulation of endothelial cell migration"/>
    <property type="evidence" value="ECO:0000314"/>
    <property type="project" value="UniProtKB"/>
</dbReference>
<dbReference type="GO" id="GO:0010593">
    <property type="term" value="P:negative regulation of lamellipodium assembly"/>
    <property type="evidence" value="ECO:0000314"/>
    <property type="project" value="UniProtKB"/>
</dbReference>
<dbReference type="GO" id="GO:0002689">
    <property type="term" value="P:negative regulation of leukocyte chemotaxis"/>
    <property type="evidence" value="ECO:0000314"/>
    <property type="project" value="UniProtKB"/>
</dbReference>
<dbReference type="GO" id="GO:0090027">
    <property type="term" value="P:negative regulation of monocyte chemotaxis"/>
    <property type="evidence" value="ECO:0000250"/>
    <property type="project" value="BHF-UCL"/>
</dbReference>
<dbReference type="GO" id="GO:0071676">
    <property type="term" value="P:negative regulation of mononuclear cell migration"/>
    <property type="evidence" value="ECO:0000314"/>
    <property type="project" value="BHF-UCL"/>
</dbReference>
<dbReference type="GO" id="GO:0090024">
    <property type="term" value="P:negative regulation of neutrophil chemotaxis"/>
    <property type="evidence" value="ECO:0000314"/>
    <property type="project" value="UniProtKB"/>
</dbReference>
<dbReference type="GO" id="GO:0001933">
    <property type="term" value="P:negative regulation of protein phosphorylation"/>
    <property type="evidence" value="ECO:0000314"/>
    <property type="project" value="UniProtKB"/>
</dbReference>
<dbReference type="GO" id="GO:0090260">
    <property type="term" value="P:negative regulation of retinal ganglion cell axon guidance"/>
    <property type="evidence" value="ECO:0000314"/>
    <property type="project" value="UniProtKB"/>
</dbReference>
<dbReference type="GO" id="GO:0051058">
    <property type="term" value="P:negative regulation of small GTPase mediated signal transduction"/>
    <property type="evidence" value="ECO:0000314"/>
    <property type="project" value="UniProtKB"/>
</dbReference>
<dbReference type="GO" id="GO:0071672">
    <property type="term" value="P:negative regulation of smooth muscle cell chemotaxis"/>
    <property type="evidence" value="ECO:0000314"/>
    <property type="project" value="BHF-UCL"/>
</dbReference>
<dbReference type="GO" id="GO:0014912">
    <property type="term" value="P:negative regulation of smooth muscle cell migration"/>
    <property type="evidence" value="ECO:0000314"/>
    <property type="project" value="BHF-UCL"/>
</dbReference>
<dbReference type="GO" id="GO:0043116">
    <property type="term" value="P:negative regulation of vascular permeability"/>
    <property type="evidence" value="ECO:0000314"/>
    <property type="project" value="UniProtKB"/>
</dbReference>
<dbReference type="GO" id="GO:0043065">
    <property type="term" value="P:positive regulation of apoptotic process"/>
    <property type="evidence" value="ECO:0000315"/>
    <property type="project" value="UniProtKB"/>
</dbReference>
<dbReference type="GO" id="GO:0050772">
    <property type="term" value="P:positive regulation of axonogenesis"/>
    <property type="evidence" value="ECO:0000304"/>
    <property type="project" value="UniProtKB"/>
</dbReference>
<dbReference type="GO" id="GO:0003184">
    <property type="term" value="P:pulmonary valve morphogenesis"/>
    <property type="evidence" value="ECO:0000250"/>
    <property type="project" value="BHF-UCL"/>
</dbReference>
<dbReference type="GO" id="GO:0051414">
    <property type="term" value="P:response to cortisol"/>
    <property type="evidence" value="ECO:0000270"/>
    <property type="project" value="UniProtKB"/>
</dbReference>
<dbReference type="GO" id="GO:0031290">
    <property type="term" value="P:retinal ganglion cell axon guidance"/>
    <property type="evidence" value="ECO:0000314"/>
    <property type="project" value="UniProtKB"/>
</dbReference>
<dbReference type="GO" id="GO:0035385">
    <property type="term" value="P:Roundabout signaling pathway"/>
    <property type="evidence" value="ECO:0000315"/>
    <property type="project" value="BHF-UCL"/>
</dbReference>
<dbReference type="GO" id="GO:0001657">
    <property type="term" value="P:ureteric bud development"/>
    <property type="evidence" value="ECO:0000315"/>
    <property type="project" value="UniProtKB"/>
</dbReference>
<dbReference type="GO" id="GO:0060412">
    <property type="term" value="P:ventricular septum morphogenesis"/>
    <property type="evidence" value="ECO:0000250"/>
    <property type="project" value="BHF-UCL"/>
</dbReference>
<dbReference type="CDD" id="cd00054">
    <property type="entry name" value="EGF_CA"/>
    <property type="match status" value="6"/>
</dbReference>
<dbReference type="CDD" id="cd00110">
    <property type="entry name" value="LamG"/>
    <property type="match status" value="1"/>
</dbReference>
<dbReference type="FunFam" id="2.10.25.10:FF:000045">
    <property type="entry name" value="Slit guidance ligand 2"/>
    <property type="match status" value="1"/>
</dbReference>
<dbReference type="FunFam" id="2.10.25.10:FF:000053">
    <property type="entry name" value="Slit guidance ligand 2"/>
    <property type="match status" value="1"/>
</dbReference>
<dbReference type="FunFam" id="2.10.25.10:FF:000054">
    <property type="entry name" value="Slit guidance ligand 2"/>
    <property type="match status" value="1"/>
</dbReference>
<dbReference type="FunFam" id="2.10.25.10:FF:000062">
    <property type="entry name" value="Slit guidance ligand 2"/>
    <property type="match status" value="1"/>
</dbReference>
<dbReference type="FunFam" id="2.10.25.10:FF:000063">
    <property type="entry name" value="Slit guidance ligand 2"/>
    <property type="match status" value="1"/>
</dbReference>
<dbReference type="FunFam" id="2.10.25.10:FF:000099">
    <property type="entry name" value="Slit guidance ligand 2"/>
    <property type="match status" value="1"/>
</dbReference>
<dbReference type="FunFam" id="2.10.25.10:FF:000289">
    <property type="entry name" value="Slit guidance ligand 2"/>
    <property type="match status" value="1"/>
</dbReference>
<dbReference type="FunFam" id="2.60.120.200:FF:000013">
    <property type="entry name" value="Slit guidance ligand 2"/>
    <property type="match status" value="1"/>
</dbReference>
<dbReference type="FunFam" id="3.80.10.10:FF:000002">
    <property type="entry name" value="Slit guidance ligand 2"/>
    <property type="match status" value="2"/>
</dbReference>
<dbReference type="FunFam" id="3.80.10.10:FF:000004">
    <property type="entry name" value="Slit guidance ligand 2"/>
    <property type="match status" value="1"/>
</dbReference>
<dbReference type="FunFam" id="3.80.10.10:FF:000376">
    <property type="entry name" value="Slit guidance ligand 2"/>
    <property type="match status" value="1"/>
</dbReference>
<dbReference type="FunFam" id="3.80.10.10:FF:000032">
    <property type="entry name" value="Slit homolog 2 (Drosophila)"/>
    <property type="match status" value="1"/>
</dbReference>
<dbReference type="Gene3D" id="2.60.120.200">
    <property type="match status" value="1"/>
</dbReference>
<dbReference type="Gene3D" id="2.10.25.10">
    <property type="entry name" value="Laminin"/>
    <property type="match status" value="8"/>
</dbReference>
<dbReference type="Gene3D" id="3.80.10.10">
    <property type="entry name" value="Ribonuclease Inhibitor"/>
    <property type="match status" value="5"/>
</dbReference>
<dbReference type="InterPro" id="IPR013320">
    <property type="entry name" value="ConA-like_dom_sf"/>
</dbReference>
<dbReference type="InterPro" id="IPR000483">
    <property type="entry name" value="Cys-rich_flank_reg_C"/>
</dbReference>
<dbReference type="InterPro" id="IPR006207">
    <property type="entry name" value="Cys_knot_C"/>
</dbReference>
<dbReference type="InterPro" id="IPR001881">
    <property type="entry name" value="EGF-like_Ca-bd_dom"/>
</dbReference>
<dbReference type="InterPro" id="IPR013032">
    <property type="entry name" value="EGF-like_CS"/>
</dbReference>
<dbReference type="InterPro" id="IPR000742">
    <property type="entry name" value="EGF-like_dom"/>
</dbReference>
<dbReference type="InterPro" id="IPR000152">
    <property type="entry name" value="EGF-type_Asp/Asn_hydroxyl_site"/>
</dbReference>
<dbReference type="InterPro" id="IPR018097">
    <property type="entry name" value="EGF_Ca-bd_CS"/>
</dbReference>
<dbReference type="InterPro" id="IPR003645">
    <property type="entry name" value="Fol_N"/>
</dbReference>
<dbReference type="InterPro" id="IPR001791">
    <property type="entry name" value="Laminin_G"/>
</dbReference>
<dbReference type="InterPro" id="IPR001611">
    <property type="entry name" value="Leu-rich_rpt"/>
</dbReference>
<dbReference type="InterPro" id="IPR003591">
    <property type="entry name" value="Leu-rich_rpt_typical-subtyp"/>
</dbReference>
<dbReference type="InterPro" id="IPR032675">
    <property type="entry name" value="LRR_dom_sf"/>
</dbReference>
<dbReference type="InterPro" id="IPR000372">
    <property type="entry name" value="LRRNT"/>
</dbReference>
<dbReference type="InterPro" id="IPR051355">
    <property type="entry name" value="Notch/Slit_guidance"/>
</dbReference>
<dbReference type="PANTHER" id="PTHR45836">
    <property type="entry name" value="SLIT HOMOLOG"/>
    <property type="match status" value="1"/>
</dbReference>
<dbReference type="PANTHER" id="PTHR45836:SF2">
    <property type="entry name" value="SLIT HOMOLOG 2 PROTEIN"/>
    <property type="match status" value="1"/>
</dbReference>
<dbReference type="Pfam" id="PF00008">
    <property type="entry name" value="EGF"/>
    <property type="match status" value="5"/>
</dbReference>
<dbReference type="Pfam" id="PF12661">
    <property type="entry name" value="hEGF"/>
    <property type="match status" value="2"/>
</dbReference>
<dbReference type="Pfam" id="PF00054">
    <property type="entry name" value="Laminin_G_1"/>
    <property type="match status" value="1"/>
</dbReference>
<dbReference type="Pfam" id="PF00560">
    <property type="entry name" value="LRR_1"/>
    <property type="match status" value="1"/>
</dbReference>
<dbReference type="Pfam" id="PF13855">
    <property type="entry name" value="LRR_8"/>
    <property type="match status" value="7"/>
</dbReference>
<dbReference type="Pfam" id="PF01463">
    <property type="entry name" value="LRRCT"/>
    <property type="match status" value="4"/>
</dbReference>
<dbReference type="Pfam" id="PF01462">
    <property type="entry name" value="LRRNT"/>
    <property type="match status" value="3"/>
</dbReference>
<dbReference type="SMART" id="SM00041">
    <property type="entry name" value="CT"/>
    <property type="match status" value="1"/>
</dbReference>
<dbReference type="SMART" id="SM00181">
    <property type="entry name" value="EGF"/>
    <property type="match status" value="9"/>
</dbReference>
<dbReference type="SMART" id="SM00179">
    <property type="entry name" value="EGF_CA"/>
    <property type="match status" value="7"/>
</dbReference>
<dbReference type="SMART" id="SM00274">
    <property type="entry name" value="FOLN"/>
    <property type="match status" value="3"/>
</dbReference>
<dbReference type="SMART" id="SM00282">
    <property type="entry name" value="LamG"/>
    <property type="match status" value="1"/>
</dbReference>
<dbReference type="SMART" id="SM00365">
    <property type="entry name" value="LRR_SD22"/>
    <property type="match status" value="6"/>
</dbReference>
<dbReference type="SMART" id="SM00369">
    <property type="entry name" value="LRR_TYP"/>
    <property type="match status" value="17"/>
</dbReference>
<dbReference type="SMART" id="SM00082">
    <property type="entry name" value="LRRCT"/>
    <property type="match status" value="4"/>
</dbReference>
<dbReference type="SMART" id="SM00013">
    <property type="entry name" value="LRRNT"/>
    <property type="match status" value="4"/>
</dbReference>
<dbReference type="SUPFAM" id="SSF49899">
    <property type="entry name" value="Concanavalin A-like lectins/glucanases"/>
    <property type="match status" value="1"/>
</dbReference>
<dbReference type="SUPFAM" id="SSF57196">
    <property type="entry name" value="EGF/Laminin"/>
    <property type="match status" value="6"/>
</dbReference>
<dbReference type="SUPFAM" id="SSF52058">
    <property type="entry name" value="L domain-like"/>
    <property type="match status" value="2"/>
</dbReference>
<dbReference type="PROSITE" id="PS00010">
    <property type="entry name" value="ASX_HYDROXYL"/>
    <property type="match status" value="2"/>
</dbReference>
<dbReference type="PROSITE" id="PS01185">
    <property type="entry name" value="CTCK_1"/>
    <property type="match status" value="1"/>
</dbReference>
<dbReference type="PROSITE" id="PS01225">
    <property type="entry name" value="CTCK_2"/>
    <property type="match status" value="1"/>
</dbReference>
<dbReference type="PROSITE" id="PS00022">
    <property type="entry name" value="EGF_1"/>
    <property type="match status" value="9"/>
</dbReference>
<dbReference type="PROSITE" id="PS01186">
    <property type="entry name" value="EGF_2"/>
    <property type="match status" value="7"/>
</dbReference>
<dbReference type="PROSITE" id="PS50026">
    <property type="entry name" value="EGF_3"/>
    <property type="match status" value="9"/>
</dbReference>
<dbReference type="PROSITE" id="PS01187">
    <property type="entry name" value="EGF_CA"/>
    <property type="match status" value="2"/>
</dbReference>
<dbReference type="PROSITE" id="PS50025">
    <property type="entry name" value="LAM_G_DOMAIN"/>
    <property type="match status" value="1"/>
</dbReference>
<dbReference type="PROSITE" id="PS51450">
    <property type="entry name" value="LRR"/>
    <property type="match status" value="20"/>
</dbReference>
<name>SLIT2_HUMAN</name>
<protein>
    <recommendedName>
        <fullName>Slit homolog 2 protein</fullName>
        <shortName>Slit-2</shortName>
    </recommendedName>
    <component>
        <recommendedName>
            <fullName>Slit homolog 2 protein N-product</fullName>
        </recommendedName>
    </component>
    <component>
        <recommendedName>
            <fullName>Slit homolog 2 protein C-product</fullName>
        </recommendedName>
    </component>
</protein>
<feature type="signal peptide" evidence="2">
    <location>
        <begin position="1"/>
        <end position="30"/>
    </location>
</feature>
<feature type="chain" id="PRO_0000007725" description="Slit homolog 2 protein">
    <location>
        <begin position="31"/>
        <end position="1529"/>
    </location>
</feature>
<feature type="chain" id="PRO_0000007726" description="Slit homolog 2 protein N-product">
    <location>
        <begin position="31"/>
        <end position="1121"/>
    </location>
</feature>
<feature type="chain" id="PRO_0000007727" description="Slit homolog 2 protein C-product">
    <location>
        <begin position="1122"/>
        <end position="1529"/>
    </location>
</feature>
<feature type="domain" description="LRRNT">
    <location>
        <begin position="31"/>
        <end position="55"/>
    </location>
</feature>
<feature type="repeat" description="LRR 1">
    <location>
        <begin position="56"/>
        <end position="77"/>
    </location>
</feature>
<feature type="repeat" description="LRR 2">
    <location>
        <begin position="80"/>
        <end position="101"/>
    </location>
</feature>
<feature type="repeat" description="LRR 3">
    <location>
        <begin position="104"/>
        <end position="125"/>
    </location>
</feature>
<feature type="repeat" description="LRR 4">
    <location>
        <begin position="128"/>
        <end position="149"/>
    </location>
</feature>
<feature type="repeat" description="LRR 5">
    <location>
        <begin position="152"/>
        <end position="173"/>
    </location>
</feature>
<feature type="repeat" description="LRR 6">
    <location>
        <begin position="176"/>
        <end position="197"/>
    </location>
</feature>
<feature type="domain" description="LRRCT 1">
    <location>
        <begin position="209"/>
        <end position="259"/>
    </location>
</feature>
<feature type="domain" description="LRRNT 2">
    <location>
        <begin position="264"/>
        <end position="300"/>
    </location>
</feature>
<feature type="repeat" description="LRR 7">
    <location>
        <begin position="301"/>
        <end position="322"/>
    </location>
</feature>
<feature type="repeat" description="LRR 8">
    <location>
        <begin position="325"/>
        <end position="346"/>
    </location>
</feature>
<feature type="repeat" description="LRR 9">
    <location>
        <begin position="349"/>
        <end position="370"/>
    </location>
</feature>
<feature type="repeat" description="LRR 10">
    <location>
        <begin position="373"/>
        <end position="394"/>
    </location>
</feature>
<feature type="repeat" description="LRR 11">
    <location>
        <begin position="397"/>
        <end position="418"/>
    </location>
</feature>
<feature type="domain" description="LRRCT 2">
    <location>
        <begin position="430"/>
        <end position="480"/>
    </location>
</feature>
<feature type="domain" description="LRRNT 3">
    <location>
        <begin position="497"/>
        <end position="533"/>
    </location>
</feature>
<feature type="repeat" description="LRR 12">
    <location>
        <begin position="534"/>
        <end position="555"/>
    </location>
</feature>
<feature type="repeat" description="LRR 13">
    <location>
        <begin position="559"/>
        <end position="580"/>
    </location>
</feature>
<feature type="repeat" description="LRR 14">
    <location>
        <begin position="583"/>
        <end position="604"/>
    </location>
</feature>
<feature type="repeat" description="LRR 15">
    <location>
        <begin position="607"/>
        <end position="628"/>
    </location>
</feature>
<feature type="repeat" description="LRR 16">
    <location>
        <begin position="631"/>
        <end position="652"/>
    </location>
</feature>
<feature type="domain" description="LRRCT 3">
    <location>
        <begin position="664"/>
        <end position="714"/>
    </location>
</feature>
<feature type="domain" description="LRRNT 4">
    <location>
        <begin position="718"/>
        <end position="754"/>
    </location>
</feature>
<feature type="repeat" description="LRR 17">
    <location>
        <begin position="755"/>
        <end position="777"/>
    </location>
</feature>
<feature type="repeat" description="LRR 18">
    <location>
        <begin position="778"/>
        <end position="799"/>
    </location>
</feature>
<feature type="repeat" description="LRR 19">
    <location>
        <begin position="802"/>
        <end position="823"/>
    </location>
</feature>
<feature type="repeat" description="LRR 20">
    <location>
        <begin position="826"/>
        <end position="847"/>
    </location>
</feature>
<feature type="domain" description="LRRCT 4">
    <location>
        <begin position="859"/>
        <end position="909"/>
    </location>
</feature>
<feature type="domain" description="EGF-like 1" evidence="4">
    <location>
        <begin position="918"/>
        <end position="955"/>
    </location>
</feature>
<feature type="domain" description="EGF-like 2" evidence="4">
    <location>
        <begin position="957"/>
        <end position="996"/>
    </location>
</feature>
<feature type="domain" description="EGF-like 3; calcium-binding" evidence="4">
    <location>
        <begin position="998"/>
        <end position="1034"/>
    </location>
</feature>
<feature type="domain" description="EGF-like 4" evidence="4">
    <location>
        <begin position="1036"/>
        <end position="1074"/>
    </location>
</feature>
<feature type="domain" description="EGF-like 5; calcium-binding" evidence="4">
    <location>
        <begin position="1076"/>
        <end position="1112"/>
    </location>
</feature>
<feature type="domain" description="EGF-like 6" evidence="4">
    <location>
        <begin position="1121"/>
        <end position="1157"/>
    </location>
</feature>
<feature type="domain" description="Laminin G-like" evidence="5">
    <location>
        <begin position="1160"/>
        <end position="1333"/>
    </location>
</feature>
<feature type="domain" description="EGF-like 7" evidence="4">
    <location>
        <begin position="1332"/>
        <end position="1368"/>
    </location>
</feature>
<feature type="domain" description="CTCK" evidence="3 21">
    <location>
        <begin position="1453"/>
        <end position="1528"/>
    </location>
</feature>
<feature type="site" description="Cleavage">
    <location>
        <begin position="1121"/>
        <end position="1122"/>
    </location>
</feature>
<feature type="glycosylation site" description="N-linked (GlcNAc...) asparagine" evidence="2">
    <location>
        <position position="66"/>
    </location>
</feature>
<feature type="glycosylation site" description="N-linked (GlcNAc...) asparagine" evidence="2">
    <location>
        <position position="186"/>
    </location>
</feature>
<feature type="glycosylation site" description="N-linked (GlcNAc...) asparagine" evidence="2">
    <location>
        <position position="564"/>
    </location>
</feature>
<feature type="glycosylation site" description="N-linked (GlcNAc...) asparagine">
    <location>
        <position position="623"/>
    </location>
</feature>
<feature type="glycosylation site" description="N-linked (GlcNAc...) asparagine" evidence="2">
    <location>
        <position position="794"/>
    </location>
</feature>
<feature type="glycosylation site" description="N-linked (GlcNAc...) asparagine" evidence="2">
    <location>
        <position position="799"/>
    </location>
</feature>
<feature type="glycosylation site" description="N-linked (GlcNAc...) asparagine" evidence="2">
    <location>
        <position position="1009"/>
    </location>
</feature>
<feature type="glycosylation site" description="N-linked (GlcNAc...) asparagine" evidence="2">
    <location>
        <position position="1010"/>
    </location>
</feature>
<feature type="glycosylation site" description="N-linked (GlcNAc...) asparagine" evidence="2">
    <location>
        <position position="1019"/>
    </location>
</feature>
<feature type="glycosylation site" description="N-linked (GlcNAc...) asparagine" evidence="2">
    <location>
        <position position="1183"/>
    </location>
</feature>
<feature type="glycosylation site" description="N-linked (GlcNAc...) asparagine" evidence="2">
    <location>
        <position position="1266"/>
    </location>
</feature>
<feature type="glycosylation site" description="N-linked (GlcNAc...) asparagine" evidence="2">
    <location>
        <position position="1300"/>
    </location>
</feature>
<feature type="disulfide bond">
    <location>
        <begin position="277"/>
        <end position="286"/>
    </location>
</feature>
<feature type="disulfide bond">
    <location>
        <begin position="434"/>
        <end position="457"/>
    </location>
</feature>
<feature type="disulfide bond">
    <location>
        <begin position="436"/>
        <end position="478"/>
    </location>
</feature>
<feature type="disulfide bond">
    <location>
        <begin position="506"/>
        <end position="512"/>
    </location>
</feature>
<feature type="disulfide bond">
    <location>
        <begin position="510"/>
        <end position="519"/>
    </location>
</feature>
<feature type="disulfide bond">
    <location>
        <begin position="668"/>
        <end position="691"/>
    </location>
</feature>
<feature type="disulfide bond">
    <location>
        <begin position="670"/>
        <end position="712"/>
    </location>
</feature>
<feature type="disulfide bond">
    <location>
        <begin position="727"/>
        <end position="733"/>
    </location>
</feature>
<feature type="disulfide bond">
    <location>
        <begin position="731"/>
        <end position="740"/>
    </location>
</feature>
<feature type="disulfide bond">
    <location>
        <begin position="863"/>
        <end position="886"/>
    </location>
</feature>
<feature type="disulfide bond">
    <location>
        <begin position="865"/>
        <end position="907"/>
    </location>
</feature>
<feature type="disulfide bond" evidence="1">
    <location>
        <begin position="922"/>
        <end position="933"/>
    </location>
</feature>
<feature type="disulfide bond" evidence="1">
    <location>
        <begin position="927"/>
        <end position="943"/>
    </location>
</feature>
<feature type="disulfide bond" evidence="1">
    <location>
        <begin position="945"/>
        <end position="954"/>
    </location>
</feature>
<feature type="disulfide bond" evidence="1">
    <location>
        <begin position="961"/>
        <end position="972"/>
    </location>
</feature>
<feature type="disulfide bond" evidence="1">
    <location>
        <begin position="966"/>
        <end position="984"/>
    </location>
</feature>
<feature type="disulfide bond" evidence="1">
    <location>
        <begin position="986"/>
        <end position="995"/>
    </location>
</feature>
<feature type="disulfide bond" evidence="1">
    <location>
        <begin position="1002"/>
        <end position="1013"/>
    </location>
</feature>
<feature type="disulfide bond" evidence="1">
    <location>
        <begin position="1007"/>
        <end position="1022"/>
    </location>
</feature>
<feature type="disulfide bond" evidence="1">
    <location>
        <begin position="1024"/>
        <end position="1033"/>
    </location>
</feature>
<feature type="disulfide bond" evidence="1">
    <location>
        <begin position="1040"/>
        <end position="1053"/>
    </location>
</feature>
<feature type="disulfide bond" evidence="1">
    <location>
        <begin position="1047"/>
        <end position="1062"/>
    </location>
</feature>
<feature type="disulfide bond" evidence="1">
    <location>
        <begin position="1064"/>
        <end position="1073"/>
    </location>
</feature>
<feature type="disulfide bond" evidence="1">
    <location>
        <begin position="1080"/>
        <end position="1091"/>
    </location>
</feature>
<feature type="disulfide bond" evidence="1">
    <location>
        <begin position="1085"/>
        <end position="1100"/>
    </location>
</feature>
<feature type="disulfide bond" evidence="1">
    <location>
        <begin position="1102"/>
        <end position="1111"/>
    </location>
</feature>
<feature type="disulfide bond" evidence="1">
    <location>
        <begin position="1125"/>
        <end position="1136"/>
    </location>
</feature>
<feature type="disulfide bond" evidence="1">
    <location>
        <begin position="1130"/>
        <end position="1145"/>
    </location>
</feature>
<feature type="disulfide bond" evidence="1">
    <location>
        <begin position="1147"/>
        <end position="1156"/>
    </location>
</feature>
<feature type="disulfide bond" evidence="1">
    <location>
        <begin position="1307"/>
        <end position="1333"/>
    </location>
</feature>
<feature type="disulfide bond" evidence="1">
    <location>
        <begin position="1336"/>
        <end position="1346"/>
    </location>
</feature>
<feature type="disulfide bond" evidence="1">
    <location>
        <begin position="1341"/>
        <end position="1356"/>
    </location>
</feature>
<feature type="disulfide bond" evidence="1">
    <location>
        <begin position="1358"/>
        <end position="1367"/>
    </location>
</feature>
<feature type="disulfide bond" evidence="1">
    <location>
        <begin position="1375"/>
        <end position="1385"/>
    </location>
</feature>
<feature type="disulfide bond" evidence="1">
    <location>
        <begin position="1380"/>
        <end position="1395"/>
    </location>
</feature>
<feature type="disulfide bond" evidence="1">
    <location>
        <begin position="1397"/>
        <end position="1406"/>
    </location>
</feature>
<feature type="disulfide bond" evidence="1">
    <location>
        <begin position="1416"/>
        <end position="1426"/>
    </location>
</feature>
<feature type="disulfide bond" evidence="1">
    <location>
        <begin position="1421"/>
        <end position="1436"/>
    </location>
</feature>
<feature type="disulfide bond" evidence="1">
    <location>
        <begin position="1438"/>
        <end position="1447"/>
    </location>
</feature>
<feature type="disulfide bond" evidence="1">
    <location>
        <begin position="1453"/>
        <end position="1492"/>
    </location>
</feature>
<feature type="disulfide bond" evidence="1">
    <location>
        <begin position="1471"/>
        <end position="1506"/>
    </location>
</feature>
<feature type="disulfide bond" evidence="1">
    <location>
        <begin position="1482"/>
        <end position="1522"/>
    </location>
</feature>
<feature type="disulfide bond" evidence="1">
    <location>
        <begin position="1486"/>
        <end position="1524"/>
    </location>
</feature>
<feature type="splice variant" id="VSP_050035" description="In isoform 2." evidence="17 20">
    <original>S</original>
    <variation>SDEEE</variation>
    <location>
        <position position="258"/>
    </location>
</feature>
<feature type="splice variant" id="VSP_050036" description="In isoform 2 and isoform 3." evidence="17 18 19 20">
    <location>
        <begin position="480"/>
        <end position="487"/>
    </location>
</feature>
<feature type="sequence variant" id="VAR_018098" evidence="16">
    <original>S</original>
    <variation>P</variation>
    <location>
        <position position="636"/>
    </location>
</feature>
<feature type="sequence variant" id="VAR_018099" description="In dbSNP:rs771375896." evidence="16">
    <original>S</original>
    <variation>F</variation>
    <location>
        <position position="1277"/>
    </location>
</feature>
<feature type="sequence conflict" description="In Ref. 2; AAD25539." evidence="21" ref="2">
    <original>Q</original>
    <variation>K</variation>
    <location>
        <position position="226"/>
    </location>
</feature>
<feature type="sequence conflict" description="In Ref. 3; AAD04309." evidence="21" ref="3">
    <original>SLKT</original>
    <variation>KPQN</variation>
    <location>
        <begin position="607"/>
        <end position="610"/>
    </location>
</feature>
<feature type="sequence conflict" description="In Ref. 3; AAD04309." evidence="21" ref="3">
    <original>L</original>
    <variation>M</variation>
    <location>
        <position position="634"/>
    </location>
</feature>
<feature type="strand" evidence="25">
    <location>
        <begin position="277"/>
        <end position="280"/>
    </location>
</feature>
<feature type="strand" evidence="25">
    <location>
        <begin position="283"/>
        <end position="285"/>
    </location>
</feature>
<feature type="strand" evidence="25">
    <location>
        <begin position="304"/>
        <end position="306"/>
    </location>
</feature>
<feature type="turn" evidence="24">
    <location>
        <begin position="317"/>
        <end position="322"/>
    </location>
</feature>
<feature type="strand" evidence="25">
    <location>
        <begin position="328"/>
        <end position="330"/>
    </location>
</feature>
<feature type="turn" evidence="25">
    <location>
        <begin position="341"/>
        <end position="346"/>
    </location>
</feature>
<feature type="strand" evidence="25">
    <location>
        <begin position="352"/>
        <end position="354"/>
    </location>
</feature>
<feature type="turn" evidence="25">
    <location>
        <begin position="365"/>
        <end position="370"/>
    </location>
</feature>
<feature type="strand" evidence="25">
    <location>
        <begin position="376"/>
        <end position="378"/>
    </location>
</feature>
<feature type="turn" evidence="25">
    <location>
        <begin position="389"/>
        <end position="394"/>
    </location>
</feature>
<feature type="strand" evidence="25">
    <location>
        <begin position="400"/>
        <end position="402"/>
    </location>
</feature>
<feature type="turn" evidence="25">
    <location>
        <begin position="413"/>
        <end position="418"/>
    </location>
</feature>
<feature type="strand" evidence="25">
    <location>
        <begin position="424"/>
        <end position="426"/>
    </location>
</feature>
<feature type="helix" evidence="25">
    <location>
        <begin position="436"/>
        <end position="438"/>
    </location>
</feature>
<feature type="helix" evidence="25">
    <location>
        <begin position="439"/>
        <end position="447"/>
    </location>
</feature>
<feature type="strand" evidence="25">
    <location>
        <begin position="456"/>
        <end position="460"/>
    </location>
</feature>
<feature type="helix" evidence="25">
    <location>
        <begin position="461"/>
        <end position="463"/>
    </location>
</feature>
<feature type="helix" evidence="25">
    <location>
        <begin position="468"/>
        <end position="470"/>
    </location>
</feature>
<feature type="helix" evidence="25">
    <location>
        <begin position="473"/>
        <end position="475"/>
    </location>
</feature>
<feature type="strand" evidence="23">
    <location>
        <begin position="511"/>
        <end position="513"/>
    </location>
</feature>
<feature type="strand" evidence="23">
    <location>
        <begin position="516"/>
        <end position="518"/>
    </location>
</feature>
<feature type="strand" evidence="23">
    <location>
        <begin position="536"/>
        <end position="539"/>
    </location>
</feature>
<feature type="helix" evidence="23">
    <location>
        <begin position="554"/>
        <end position="556"/>
    </location>
</feature>
<feature type="strand" evidence="23">
    <location>
        <begin position="562"/>
        <end position="564"/>
    </location>
</feature>
<feature type="turn" evidence="23">
    <location>
        <begin position="575"/>
        <end position="580"/>
    </location>
</feature>
<feature type="strand" evidence="23">
    <location>
        <begin position="586"/>
        <end position="588"/>
    </location>
</feature>
<feature type="helix" evidence="23">
    <location>
        <begin position="599"/>
        <end position="602"/>
    </location>
</feature>
<feature type="strand" evidence="23">
    <location>
        <begin position="610"/>
        <end position="612"/>
    </location>
</feature>
<feature type="strand" evidence="23">
    <location>
        <begin position="633"/>
        <end position="636"/>
    </location>
</feature>
<feature type="turn" evidence="23">
    <location>
        <begin position="647"/>
        <end position="652"/>
    </location>
</feature>
<feature type="strand" evidence="23">
    <location>
        <begin position="658"/>
        <end position="660"/>
    </location>
</feature>
<feature type="helix" evidence="23">
    <location>
        <begin position="670"/>
        <end position="672"/>
    </location>
</feature>
<feature type="helix" evidence="23">
    <location>
        <begin position="673"/>
        <end position="681"/>
    </location>
</feature>
<feature type="strand" evidence="23">
    <location>
        <begin position="690"/>
        <end position="694"/>
    </location>
</feature>
<feature type="helix" evidence="23">
    <location>
        <begin position="695"/>
        <end position="697"/>
    </location>
</feature>
<feature type="helix" evidence="23">
    <location>
        <begin position="702"/>
        <end position="704"/>
    </location>
</feature>
<feature type="helix" evidence="23">
    <location>
        <begin position="707"/>
        <end position="709"/>
    </location>
</feature>
<feature type="strand" evidence="26">
    <location>
        <begin position="732"/>
        <end position="734"/>
    </location>
</feature>
<feature type="strand" evidence="26">
    <location>
        <begin position="737"/>
        <end position="739"/>
    </location>
</feature>
<feature type="strand" evidence="26">
    <location>
        <begin position="758"/>
        <end position="760"/>
    </location>
</feature>
<feature type="helix" evidence="26">
    <location>
        <begin position="771"/>
        <end position="775"/>
    </location>
</feature>
<feature type="strand" evidence="26">
    <location>
        <begin position="781"/>
        <end position="783"/>
    </location>
</feature>
<feature type="turn" evidence="26">
    <location>
        <begin position="794"/>
        <end position="799"/>
    </location>
</feature>
<feature type="strand" evidence="26">
    <location>
        <begin position="805"/>
        <end position="807"/>
    </location>
</feature>
<feature type="turn" evidence="26">
    <location>
        <begin position="818"/>
        <end position="823"/>
    </location>
</feature>
<feature type="strand" evidence="26">
    <location>
        <begin position="829"/>
        <end position="831"/>
    </location>
</feature>
<feature type="turn" evidence="26">
    <location>
        <begin position="842"/>
        <end position="847"/>
    </location>
</feature>
<feature type="strand" evidence="26">
    <location>
        <begin position="853"/>
        <end position="855"/>
    </location>
</feature>
<feature type="helix" evidence="26">
    <location>
        <begin position="865"/>
        <end position="867"/>
    </location>
</feature>
<feature type="helix" evidence="26">
    <location>
        <begin position="868"/>
        <end position="876"/>
    </location>
</feature>
<feature type="strand" evidence="26">
    <location>
        <begin position="885"/>
        <end position="889"/>
    </location>
</feature>
<feature type="helix" evidence="26">
    <location>
        <begin position="890"/>
        <end position="892"/>
    </location>
</feature>
<feature type="turn" evidence="26">
    <location>
        <begin position="897"/>
        <end position="899"/>
    </location>
</feature>
<feature type="helix" evidence="26">
    <location>
        <begin position="902"/>
        <end position="904"/>
    </location>
</feature>
<sequence length="1529" mass="169870">MRGVGWQMLSLSLGLVLAILNKVAPQACPAQCSCSGSTVDCHGLALRSVPRNIPRNTERLDLNGNNITRITKTDFAGLRHLRVLQLMENKISTIERGAFQDLKELERLRLNRNHLQLFPELLFLGTAKLYRLDLSENQIQAIPRKAFRGAVDIKNLQLDYNQISCIEDGAFRALRDLEVLTLNNNNITRLSVASFNHMPKLRTFRLHSNNLYCDCHLAWLSDWLRQRPRVGLYTQCMGPSHLRGHNVAEVQKREFVCSGHQSFMAPSCSVLHCPAACTCSNNIVDCRGKGLTEIPTNLPETITEIRLEQNTIKVIPPGAFSPYKKLRRIDLSNNQISELAPDAFQGLRSLNSLVLYGNKITELPKSLFEGLFSLQLLLLNANKINCLRVDAFQDLHNLNLLSLYDNKLQTIAKGTFSPLRAIQTMHLAQNPFICDCHLKWLADYLHTNPIETSGARCTSPRRLANKRIGQIKSKKFRCSAKEQYFIPGTEDYRSKLSGDCFADLACPEKCRCEGTTVDCSNQKLNKIPEHIPQYTAELRLNNNEFTVLEATGIFKKLPQLRKINFSNNKITDIEEGAFEGASGVNEILLTSNRLENVQHKMFKGLESLKTLMLRSNRITCVGNDSFIGLSSVRLLSLYDNQITTVAPGAFDTLHSLSTLNLLANPFNCNCYLAWLGEWLRKKRIVTGNPRCQKPYFLKEIPIQDVAIQDFTCDDGNDDNSCSPLSRCPTECTCLDTVVRCSNKGLKVLPKGIPRDVTELYLDGNQFTLVPKELSNYKHLTLIDLSNNRISTLSNQSFSNMTQLLTLILSYNRLRCIPPRTFDGLKSLRLLSLHGNDISVVPEGAFNDLSALSHLAIGANPLYCDCNMQWLSDWVKSEYKEPGIARCAGPGEMADKLLLTTPSKKFTCQGPVDVNILAKCNPCLSNPCKNDGTCNSDPVDFYRCTCPYGFKGQDCDVPIHACISNPCKHGGTCHLKEGEEDGFWCICADGFEGENCEVNVDDCEDNDCENNSTCVDGINNYTCLCPPEYTGELCEEKLDFCAQDLNPCQHDSKCILTPKGFKCDCTPGYVGEHCDIDFDDCQDNKCKNGAHCTDAVNGYTCICPEGYSGLFCEFSPPMVLPRTSPCDNFDCQNGAQCIVRINEPICQCLPGYQGEKCEKLVSVNFINKESYLQIPSAKVRPQTNITLQIATDEDSGILLYKGDKDHIAVELYRGRVRASYDTGSHPASAIYSVETINDGNFHIVELLALDQSLSLSVDGGNPKIITNLSKQSTLNFDSPLYVGGMPGKSNVASLRQAPGQNGTSFHGCIRNLYINSELQDFQKVPMQTGILPGCEPCHKKVCAHGTCQPSSQAGFTCECQEGWMGPLCDQRTNDPCLGNKCVHGTCLPINAFSYSCKCLEGHGGVLCDEEEDLFNPCQAIKCKHGKCRLSGLGQPYCECSSGYTGDSCDREISCRGERIRDYYQKQQGYAACQTTKKVSRLECRGGCAGGQCCGPLRSKRRKYSFECTDGSSFVDEVEKVVKCGCTRCVS</sequence>
<organism evidence="22">
    <name type="scientific">Homo sapiens</name>
    <name type="common">Human</name>
    <dbReference type="NCBI Taxonomy" id="9606"/>
    <lineage>
        <taxon>Eukaryota</taxon>
        <taxon>Metazoa</taxon>
        <taxon>Chordata</taxon>
        <taxon>Craniata</taxon>
        <taxon>Vertebrata</taxon>
        <taxon>Euteleostomi</taxon>
        <taxon>Mammalia</taxon>
        <taxon>Eutheria</taxon>
        <taxon>Euarchontoglires</taxon>
        <taxon>Primates</taxon>
        <taxon>Haplorrhini</taxon>
        <taxon>Catarrhini</taxon>
        <taxon>Hominidae</taxon>
        <taxon>Homo</taxon>
    </lineage>
</organism>